<dbReference type="EC" id="2.3.1.269" evidence="1"/>
<dbReference type="EMBL" id="BX572594">
    <property type="protein sequence ID" value="CAE25888.1"/>
    <property type="molecule type" value="Genomic_DNA"/>
</dbReference>
<dbReference type="RefSeq" id="WP_011156012.1">
    <property type="nucleotide sequence ID" value="NZ_CP116810.1"/>
</dbReference>
<dbReference type="SMR" id="P61036"/>
<dbReference type="STRING" id="258594.RPA0444"/>
<dbReference type="GeneID" id="66891459"/>
<dbReference type="eggNOG" id="COG0815">
    <property type="taxonomic scope" value="Bacteria"/>
</dbReference>
<dbReference type="HOGENOM" id="CLU_019563_3_1_5"/>
<dbReference type="PhylomeDB" id="P61036"/>
<dbReference type="UniPathway" id="UPA00666"/>
<dbReference type="GO" id="GO:0005886">
    <property type="term" value="C:plasma membrane"/>
    <property type="evidence" value="ECO:0007669"/>
    <property type="project" value="UniProtKB-SubCell"/>
</dbReference>
<dbReference type="GO" id="GO:0016410">
    <property type="term" value="F:N-acyltransferase activity"/>
    <property type="evidence" value="ECO:0007669"/>
    <property type="project" value="UniProtKB-UniRule"/>
</dbReference>
<dbReference type="GO" id="GO:0042158">
    <property type="term" value="P:lipoprotein biosynthetic process"/>
    <property type="evidence" value="ECO:0007669"/>
    <property type="project" value="UniProtKB-UniRule"/>
</dbReference>
<dbReference type="CDD" id="cd07571">
    <property type="entry name" value="ALP_N-acyl_transferase"/>
    <property type="match status" value="1"/>
</dbReference>
<dbReference type="Gene3D" id="3.60.110.10">
    <property type="entry name" value="Carbon-nitrogen hydrolase"/>
    <property type="match status" value="1"/>
</dbReference>
<dbReference type="HAMAP" id="MF_01148">
    <property type="entry name" value="Lnt"/>
    <property type="match status" value="1"/>
</dbReference>
<dbReference type="InterPro" id="IPR004563">
    <property type="entry name" value="Apolipo_AcylTrfase"/>
</dbReference>
<dbReference type="InterPro" id="IPR003010">
    <property type="entry name" value="C-N_Hydrolase"/>
</dbReference>
<dbReference type="InterPro" id="IPR036526">
    <property type="entry name" value="C-N_Hydrolase_sf"/>
</dbReference>
<dbReference type="InterPro" id="IPR045378">
    <property type="entry name" value="LNT_N"/>
</dbReference>
<dbReference type="NCBIfam" id="TIGR00546">
    <property type="entry name" value="lnt"/>
    <property type="match status" value="1"/>
</dbReference>
<dbReference type="PANTHER" id="PTHR38686">
    <property type="entry name" value="APOLIPOPROTEIN N-ACYLTRANSFERASE"/>
    <property type="match status" value="1"/>
</dbReference>
<dbReference type="PANTHER" id="PTHR38686:SF1">
    <property type="entry name" value="APOLIPOPROTEIN N-ACYLTRANSFERASE"/>
    <property type="match status" value="1"/>
</dbReference>
<dbReference type="Pfam" id="PF00795">
    <property type="entry name" value="CN_hydrolase"/>
    <property type="match status" value="1"/>
</dbReference>
<dbReference type="Pfam" id="PF20154">
    <property type="entry name" value="LNT_N"/>
    <property type="match status" value="1"/>
</dbReference>
<dbReference type="SUPFAM" id="SSF56317">
    <property type="entry name" value="Carbon-nitrogen hydrolase"/>
    <property type="match status" value="1"/>
</dbReference>
<dbReference type="PROSITE" id="PS50263">
    <property type="entry name" value="CN_HYDROLASE"/>
    <property type="match status" value="1"/>
</dbReference>
<feature type="chain" id="PRO_0000178092" description="Apolipoprotein N-acyltransferase">
    <location>
        <begin position="1"/>
        <end position="536"/>
    </location>
</feature>
<feature type="transmembrane region" description="Helical" evidence="1">
    <location>
        <begin position="10"/>
        <end position="30"/>
    </location>
</feature>
<feature type="transmembrane region" description="Helical" evidence="1">
    <location>
        <begin position="42"/>
        <end position="62"/>
    </location>
</feature>
<feature type="transmembrane region" description="Helical" evidence="1">
    <location>
        <begin position="76"/>
        <end position="96"/>
    </location>
</feature>
<feature type="transmembrane region" description="Helical" evidence="1">
    <location>
        <begin position="107"/>
        <end position="127"/>
    </location>
</feature>
<feature type="transmembrane region" description="Helical" evidence="1">
    <location>
        <begin position="136"/>
        <end position="158"/>
    </location>
</feature>
<feature type="transmembrane region" description="Helical" evidence="1">
    <location>
        <begin position="181"/>
        <end position="201"/>
    </location>
</feature>
<feature type="transmembrane region" description="Helical" evidence="1">
    <location>
        <begin position="212"/>
        <end position="232"/>
    </location>
</feature>
<feature type="transmembrane region" description="Helical" evidence="1">
    <location>
        <begin position="509"/>
        <end position="529"/>
    </location>
</feature>
<feature type="domain" description="CN hydrolase" evidence="1">
    <location>
        <begin position="248"/>
        <end position="501"/>
    </location>
</feature>
<feature type="active site" description="Proton acceptor" evidence="1">
    <location>
        <position position="295"/>
    </location>
</feature>
<feature type="active site" evidence="1">
    <location>
        <position position="360"/>
    </location>
</feature>
<feature type="active site" description="Nucleophile" evidence="1">
    <location>
        <position position="413"/>
    </location>
</feature>
<gene>
    <name evidence="1" type="primary">lnt</name>
    <name type="ordered locus">RPA0444</name>
</gene>
<proteinExistence type="inferred from homology"/>
<name>LNT_RHOPA</name>
<protein>
    <recommendedName>
        <fullName evidence="1">Apolipoprotein N-acyltransferase</fullName>
        <shortName evidence="1">ALP N-acyltransferase</shortName>
        <ecNumber evidence="1">2.3.1.269</ecNumber>
    </recommendedName>
</protein>
<sequence>MTRRGVLSRIASGIILAWGWKRAVIALLAGALSSLAMEPFNAWPVLFITFPIAVWLIDGSAAGKRRGVPAAAMAGWWFGFGYFVPGLYWIGYAFLVDADTFAWLLPAAICGLPAYLALFTALGFALARLLWRPDSLRILSLAVSLTISEWLRGHLLTGFPWNAFGYALTEPLVLAQSISVIGIWGLTLLTVAIFASPAVLIDGGTNTRRRWAVPAMALGVLAAMTVFGGIRLKLSPTQLVDNVRLRIMQPNLPQDARFNYSAKADVMQKYLSLSDRSTGPKSTGVRDVSLLIWPESAFPFFLSREADAMAQIAELLPKGTVLLTGAVRPPELPPGRRITRAYNSIYAIDHDGSILSVYDKLHLVPFGEFLPYQNLMEKIGFVQLTKVQGGFLSGVARHNLELPNAPPLLPLICYEAIFPDEIAIGNNRPGWMLNLTNDGWFGISSGPYQHLQQARMRAIEQGLPLVRAANTGVSAVIDPVGRIVAELGLGVEGVLDSGLPAPVAPTIYARVGELPAAVLVALVMMLVLLRKRPPGS</sequence>
<evidence type="ECO:0000255" key="1">
    <source>
        <dbReference type="HAMAP-Rule" id="MF_01148"/>
    </source>
</evidence>
<reference key="1">
    <citation type="journal article" date="2004" name="Nat. Biotechnol.">
        <title>Complete genome sequence of the metabolically versatile photosynthetic bacterium Rhodopseudomonas palustris.</title>
        <authorList>
            <person name="Larimer F.W."/>
            <person name="Chain P."/>
            <person name="Hauser L."/>
            <person name="Lamerdin J.E."/>
            <person name="Malfatti S."/>
            <person name="Do L."/>
            <person name="Land M.L."/>
            <person name="Pelletier D.A."/>
            <person name="Beatty J.T."/>
            <person name="Lang A.S."/>
            <person name="Tabita F.R."/>
            <person name="Gibson J.L."/>
            <person name="Hanson T.E."/>
            <person name="Bobst C."/>
            <person name="Torres y Torres J.L."/>
            <person name="Peres C."/>
            <person name="Harrison F.H."/>
            <person name="Gibson J."/>
            <person name="Harwood C.S."/>
        </authorList>
    </citation>
    <scope>NUCLEOTIDE SEQUENCE [LARGE SCALE GENOMIC DNA]</scope>
    <source>
        <strain>ATCC BAA-98 / CGA009</strain>
    </source>
</reference>
<organism>
    <name type="scientific">Rhodopseudomonas palustris (strain ATCC BAA-98 / CGA009)</name>
    <dbReference type="NCBI Taxonomy" id="258594"/>
    <lineage>
        <taxon>Bacteria</taxon>
        <taxon>Pseudomonadati</taxon>
        <taxon>Pseudomonadota</taxon>
        <taxon>Alphaproteobacteria</taxon>
        <taxon>Hyphomicrobiales</taxon>
        <taxon>Nitrobacteraceae</taxon>
        <taxon>Rhodopseudomonas</taxon>
    </lineage>
</organism>
<comment type="function">
    <text evidence="1">Catalyzes the phospholipid dependent N-acylation of the N-terminal cysteine of apolipoprotein, the last step in lipoprotein maturation.</text>
</comment>
<comment type="catalytic activity">
    <reaction evidence="1">
        <text>N-terminal S-1,2-diacyl-sn-glyceryl-L-cysteinyl-[lipoprotein] + a glycerophospholipid = N-acyl-S-1,2-diacyl-sn-glyceryl-L-cysteinyl-[lipoprotein] + a 2-acyl-sn-glycero-3-phospholipid + H(+)</text>
        <dbReference type="Rhea" id="RHEA:48228"/>
        <dbReference type="Rhea" id="RHEA-COMP:14681"/>
        <dbReference type="Rhea" id="RHEA-COMP:14684"/>
        <dbReference type="ChEBI" id="CHEBI:15378"/>
        <dbReference type="ChEBI" id="CHEBI:136912"/>
        <dbReference type="ChEBI" id="CHEBI:140656"/>
        <dbReference type="ChEBI" id="CHEBI:140657"/>
        <dbReference type="ChEBI" id="CHEBI:140660"/>
        <dbReference type="EC" id="2.3.1.269"/>
    </reaction>
</comment>
<comment type="pathway">
    <text evidence="1">Protein modification; lipoprotein biosynthesis (N-acyl transfer).</text>
</comment>
<comment type="subcellular location">
    <subcellularLocation>
        <location evidence="1">Cell inner membrane</location>
        <topology evidence="1">Multi-pass membrane protein</topology>
    </subcellularLocation>
</comment>
<comment type="similarity">
    <text evidence="1">Belongs to the CN hydrolase family. Apolipoprotein N-acyltransferase subfamily.</text>
</comment>
<accession>P61036</accession>
<keyword id="KW-0012">Acyltransferase</keyword>
<keyword id="KW-0997">Cell inner membrane</keyword>
<keyword id="KW-1003">Cell membrane</keyword>
<keyword id="KW-0472">Membrane</keyword>
<keyword id="KW-0808">Transferase</keyword>
<keyword id="KW-0812">Transmembrane</keyword>
<keyword id="KW-1133">Transmembrane helix</keyword>